<organism>
    <name type="scientific">Daboia russelii</name>
    <name type="common">Russel's viper</name>
    <name type="synonym">Vipera russelii</name>
    <dbReference type="NCBI Taxonomy" id="8707"/>
    <lineage>
        <taxon>Eukaryota</taxon>
        <taxon>Metazoa</taxon>
        <taxon>Chordata</taxon>
        <taxon>Craniata</taxon>
        <taxon>Vertebrata</taxon>
        <taxon>Euteleostomi</taxon>
        <taxon>Lepidosauria</taxon>
        <taxon>Squamata</taxon>
        <taxon>Bifurcata</taxon>
        <taxon>Unidentata</taxon>
        <taxon>Episquamata</taxon>
        <taxon>Toxicofera</taxon>
        <taxon>Serpentes</taxon>
        <taxon>Colubroidea</taxon>
        <taxon>Viperidae</taxon>
        <taxon>Viperinae</taxon>
        <taxon>Daboia</taxon>
    </lineage>
</organism>
<comment type="function">
    <text evidence="1">PLA2 catalyzes the calcium-dependent hydrolysis of the 2-acyl groups in 3-sn-phosphoglycerides.</text>
</comment>
<comment type="catalytic activity">
    <reaction evidence="2 4 5">
        <text>a 1,2-diacyl-sn-glycero-3-phosphocholine + H2O = a 1-acyl-sn-glycero-3-phosphocholine + a fatty acid + H(+)</text>
        <dbReference type="Rhea" id="RHEA:15801"/>
        <dbReference type="ChEBI" id="CHEBI:15377"/>
        <dbReference type="ChEBI" id="CHEBI:15378"/>
        <dbReference type="ChEBI" id="CHEBI:28868"/>
        <dbReference type="ChEBI" id="CHEBI:57643"/>
        <dbReference type="ChEBI" id="CHEBI:58168"/>
        <dbReference type="EC" id="3.1.1.4"/>
    </reaction>
</comment>
<comment type="cofactor">
    <cofactor evidence="1">
        <name>Ca(2+)</name>
        <dbReference type="ChEBI" id="CHEBI:29108"/>
    </cofactor>
    <text evidence="1">Binds 1 Ca(2+) ion.</text>
</comment>
<comment type="subcellular location">
    <subcellularLocation>
        <location evidence="6">Secreted</location>
    </subcellularLocation>
</comment>
<comment type="tissue specificity">
    <text evidence="6">Expressed by the venom gland.</text>
</comment>
<comment type="similarity">
    <text evidence="3">Belongs to the phospholipase A2 family. Group II subfamily.</text>
</comment>
<reference evidence="8" key="1">
    <citation type="journal article" date="2010" name="Biomed. Res.">
        <title>Molecular diversity in venom proteins of the Russell's viper (Daboia russellii russellii) and the Indian cobra (Naja naja) in Sri Lanka.</title>
        <authorList>
            <person name="Suzuki M."/>
            <person name="Itoh T."/>
            <person name="Bandaranayake B.M.A.I.K."/>
            <person name="Ranasinghe J.G."/>
            <person name="Athauda S.B."/>
            <person name="Moriyama A."/>
        </authorList>
    </citation>
    <scope>PROTEIN SEQUENCE</scope>
    <scope>SUBCELLULAR LOCATION</scope>
    <scope>TISSUE SPECIFICITY</scope>
    <source>
        <tissue evidence="6">Venom</tissue>
    </source>
</reference>
<accession>P86529</accession>
<dbReference type="EC" id="3.1.1.4"/>
<dbReference type="GO" id="GO:0005576">
    <property type="term" value="C:extracellular region"/>
    <property type="evidence" value="ECO:0007669"/>
    <property type="project" value="UniProtKB-SubCell"/>
</dbReference>
<dbReference type="GO" id="GO:0046872">
    <property type="term" value="F:metal ion binding"/>
    <property type="evidence" value="ECO:0007669"/>
    <property type="project" value="UniProtKB-KW"/>
</dbReference>
<dbReference type="GO" id="GO:0004623">
    <property type="term" value="F:phospholipase A2 activity"/>
    <property type="evidence" value="ECO:0007669"/>
    <property type="project" value="UniProtKB-EC"/>
</dbReference>
<dbReference type="GO" id="GO:0016042">
    <property type="term" value="P:lipid catabolic process"/>
    <property type="evidence" value="ECO:0007669"/>
    <property type="project" value="UniProtKB-KW"/>
</dbReference>
<proteinExistence type="evidence at protein level"/>
<name>PA21_DABRR</name>
<evidence type="ECO:0000250" key="1"/>
<evidence type="ECO:0000250" key="2">
    <source>
        <dbReference type="UniProtKB" id="P81458"/>
    </source>
</evidence>
<evidence type="ECO:0000255" key="3"/>
<evidence type="ECO:0000255" key="4">
    <source>
        <dbReference type="PROSITE-ProRule" id="PRU10035"/>
    </source>
</evidence>
<evidence type="ECO:0000255" key="5">
    <source>
        <dbReference type="PROSITE-ProRule" id="PRU10036"/>
    </source>
</evidence>
<evidence type="ECO:0000269" key="6">
    <source>
    </source>
</evidence>
<evidence type="ECO:0000303" key="7">
    <source>
    </source>
</evidence>
<evidence type="ECO:0000305" key="8"/>
<keyword id="KW-0106">Calcium</keyword>
<keyword id="KW-0903">Direct protein sequencing</keyword>
<keyword id="KW-0378">Hydrolase</keyword>
<keyword id="KW-0442">Lipid degradation</keyword>
<keyword id="KW-0443">Lipid metabolism</keyword>
<keyword id="KW-0479">Metal-binding</keyword>
<keyword id="KW-0964">Secreted</keyword>
<feature type="chain" id="PRO_0000394736" description="Phospholipase A2 1">
    <location>
        <begin position="1"/>
        <end position="17" status="greater than"/>
    </location>
</feature>
<feature type="non-terminal residue" evidence="7">
    <location>
        <position position="17"/>
    </location>
</feature>
<protein>
    <recommendedName>
        <fullName evidence="7">Phospholipase A2 1</fullName>
        <shortName evidence="7">PLA21</shortName>
        <shortName>svPLA2</shortName>
        <ecNumber>3.1.1.4</ecNumber>
    </recommendedName>
    <alternativeName>
        <fullName evidence="2">Phosphatidylcholine 2-acylhydrolase</fullName>
    </alternativeName>
</protein>
<sequence length="17" mass="1955">NLFQFGEMILEKTGKEA</sequence>